<gene>
    <name evidence="1" type="primary">rpmH</name>
    <name type="ordered locus">Clim_2524</name>
</gene>
<sequence length="53" mass="6256">MKRTFQPSNRKRRNKHGFRLRMSTKNGRRVLASRRAKGRHRLTVSCEMGTATK</sequence>
<evidence type="ECO:0000255" key="1">
    <source>
        <dbReference type="HAMAP-Rule" id="MF_00391"/>
    </source>
</evidence>
<evidence type="ECO:0000305" key="2"/>
<comment type="similarity">
    <text evidence="1">Belongs to the bacterial ribosomal protein bL34 family.</text>
</comment>
<accession>B3EIN0</accession>
<reference key="1">
    <citation type="submission" date="2008-05" db="EMBL/GenBank/DDBJ databases">
        <title>Complete sequence of Chlorobium limicola DSM 245.</title>
        <authorList>
            <consortium name="US DOE Joint Genome Institute"/>
            <person name="Lucas S."/>
            <person name="Copeland A."/>
            <person name="Lapidus A."/>
            <person name="Glavina del Rio T."/>
            <person name="Dalin E."/>
            <person name="Tice H."/>
            <person name="Bruce D."/>
            <person name="Goodwin L."/>
            <person name="Pitluck S."/>
            <person name="Schmutz J."/>
            <person name="Larimer F."/>
            <person name="Land M."/>
            <person name="Hauser L."/>
            <person name="Kyrpides N."/>
            <person name="Ovchinnikova G."/>
            <person name="Zhao F."/>
            <person name="Li T."/>
            <person name="Liu Z."/>
            <person name="Overmann J."/>
            <person name="Bryant D.A."/>
            <person name="Richardson P."/>
        </authorList>
    </citation>
    <scope>NUCLEOTIDE SEQUENCE [LARGE SCALE GENOMIC DNA]</scope>
    <source>
        <strain>DSM 245 / NBRC 103803 / 6330</strain>
    </source>
</reference>
<dbReference type="EMBL" id="CP001097">
    <property type="protein sequence ID" value="ACD91542.1"/>
    <property type="molecule type" value="Genomic_DNA"/>
</dbReference>
<dbReference type="RefSeq" id="WP_012467406.1">
    <property type="nucleotide sequence ID" value="NC_010803.1"/>
</dbReference>
<dbReference type="SMR" id="B3EIN0"/>
<dbReference type="STRING" id="290315.Clim_2524"/>
<dbReference type="KEGG" id="cli:Clim_2524"/>
<dbReference type="eggNOG" id="COG0230">
    <property type="taxonomic scope" value="Bacteria"/>
</dbReference>
<dbReference type="HOGENOM" id="CLU_129938_2_0_10"/>
<dbReference type="OrthoDB" id="9804164at2"/>
<dbReference type="Proteomes" id="UP000008841">
    <property type="component" value="Chromosome"/>
</dbReference>
<dbReference type="GO" id="GO:1990904">
    <property type="term" value="C:ribonucleoprotein complex"/>
    <property type="evidence" value="ECO:0007669"/>
    <property type="project" value="UniProtKB-KW"/>
</dbReference>
<dbReference type="GO" id="GO:0005840">
    <property type="term" value="C:ribosome"/>
    <property type="evidence" value="ECO:0007669"/>
    <property type="project" value="UniProtKB-KW"/>
</dbReference>
<dbReference type="GO" id="GO:0003735">
    <property type="term" value="F:structural constituent of ribosome"/>
    <property type="evidence" value="ECO:0007669"/>
    <property type="project" value="InterPro"/>
</dbReference>
<dbReference type="GO" id="GO:0006412">
    <property type="term" value="P:translation"/>
    <property type="evidence" value="ECO:0007669"/>
    <property type="project" value="UniProtKB-UniRule"/>
</dbReference>
<dbReference type="FunFam" id="1.10.287.3980:FF:000001">
    <property type="entry name" value="Mitochondrial ribosomal protein L34"/>
    <property type="match status" value="1"/>
</dbReference>
<dbReference type="Gene3D" id="1.10.287.3980">
    <property type="match status" value="1"/>
</dbReference>
<dbReference type="HAMAP" id="MF_00391">
    <property type="entry name" value="Ribosomal_bL34"/>
    <property type="match status" value="1"/>
</dbReference>
<dbReference type="InterPro" id="IPR000271">
    <property type="entry name" value="Ribosomal_bL34"/>
</dbReference>
<dbReference type="InterPro" id="IPR020939">
    <property type="entry name" value="Ribosomal_bL34_CS"/>
</dbReference>
<dbReference type="NCBIfam" id="TIGR01030">
    <property type="entry name" value="rpmH_bact"/>
    <property type="match status" value="1"/>
</dbReference>
<dbReference type="PANTHER" id="PTHR14503:SF4">
    <property type="entry name" value="LARGE RIBOSOMAL SUBUNIT PROTEIN BL34M"/>
    <property type="match status" value="1"/>
</dbReference>
<dbReference type="PANTHER" id="PTHR14503">
    <property type="entry name" value="MITOCHONDRIAL RIBOSOMAL PROTEIN 34 FAMILY MEMBER"/>
    <property type="match status" value="1"/>
</dbReference>
<dbReference type="Pfam" id="PF00468">
    <property type="entry name" value="Ribosomal_L34"/>
    <property type="match status" value="1"/>
</dbReference>
<dbReference type="PROSITE" id="PS00784">
    <property type="entry name" value="RIBOSOMAL_L34"/>
    <property type="match status" value="1"/>
</dbReference>
<keyword id="KW-0687">Ribonucleoprotein</keyword>
<keyword id="KW-0689">Ribosomal protein</keyword>
<protein>
    <recommendedName>
        <fullName evidence="1">Large ribosomal subunit protein bL34</fullName>
    </recommendedName>
    <alternativeName>
        <fullName evidence="2">50S ribosomal protein L34</fullName>
    </alternativeName>
</protein>
<organism>
    <name type="scientific">Chlorobium limicola (strain DSM 245 / NBRC 103803 / 6330)</name>
    <dbReference type="NCBI Taxonomy" id="290315"/>
    <lineage>
        <taxon>Bacteria</taxon>
        <taxon>Pseudomonadati</taxon>
        <taxon>Chlorobiota</taxon>
        <taxon>Chlorobiia</taxon>
        <taxon>Chlorobiales</taxon>
        <taxon>Chlorobiaceae</taxon>
        <taxon>Chlorobium/Pelodictyon group</taxon>
        <taxon>Chlorobium</taxon>
    </lineage>
</organism>
<feature type="chain" id="PRO_1000196021" description="Large ribosomal subunit protein bL34">
    <location>
        <begin position="1"/>
        <end position="53"/>
    </location>
</feature>
<proteinExistence type="inferred from homology"/>
<name>RL34_CHLL2</name>